<dbReference type="EMBL" id="AF166114">
    <property type="protein sequence ID" value="AAF43862.1"/>
    <property type="molecule type" value="Genomic_DNA"/>
</dbReference>
<dbReference type="RefSeq" id="NP_038422.1">
    <property type="nucleotide sequence ID" value="NC_002186.1"/>
</dbReference>
<dbReference type="SMR" id="Q9MUN8"/>
<dbReference type="GeneID" id="800873"/>
<dbReference type="GO" id="GO:0009535">
    <property type="term" value="C:chloroplast thylakoid membrane"/>
    <property type="evidence" value="ECO:0007669"/>
    <property type="project" value="UniProtKB-SubCell"/>
</dbReference>
<dbReference type="GO" id="GO:0009522">
    <property type="term" value="C:photosystem I"/>
    <property type="evidence" value="ECO:0007669"/>
    <property type="project" value="InterPro"/>
</dbReference>
<dbReference type="GO" id="GO:0015979">
    <property type="term" value="P:photosynthesis"/>
    <property type="evidence" value="ECO:0007669"/>
    <property type="project" value="UniProtKB-UniRule"/>
</dbReference>
<dbReference type="HAMAP" id="MF_00437">
    <property type="entry name" value="Ycf4"/>
    <property type="match status" value="1"/>
</dbReference>
<dbReference type="InterPro" id="IPR003359">
    <property type="entry name" value="PSI_Ycf4_assembly"/>
</dbReference>
<dbReference type="NCBIfam" id="NF002712">
    <property type="entry name" value="PRK02542.1"/>
    <property type="match status" value="1"/>
</dbReference>
<dbReference type="PANTHER" id="PTHR33288">
    <property type="match status" value="1"/>
</dbReference>
<dbReference type="PANTHER" id="PTHR33288:SF4">
    <property type="entry name" value="PHOTOSYSTEM I ASSEMBLY PROTEIN YCF4"/>
    <property type="match status" value="1"/>
</dbReference>
<dbReference type="Pfam" id="PF02392">
    <property type="entry name" value="Ycf4"/>
    <property type="match status" value="1"/>
</dbReference>
<sequence length="187" mass="21338">MINFSTNSDLILRESVVGSRRISNYWWASVVLLGASGFLIVGISSYLQYDLVPFLSAKNIVFVPQGLVMCFYGSAGILLSIYLWLTIFWNVGEGYNEFDKVNGLVRIFRWGYPGKDRRINIVYDIKDIQAIRVEIKEGINPRRVIYLKIKGTRDMPLTRIGQPLTLAEIEEQAARLARFLQVNIEGI</sequence>
<keyword id="KW-0150">Chloroplast</keyword>
<keyword id="KW-0472">Membrane</keyword>
<keyword id="KW-0602">Photosynthesis</keyword>
<keyword id="KW-0934">Plastid</keyword>
<keyword id="KW-0793">Thylakoid</keyword>
<keyword id="KW-0812">Transmembrane</keyword>
<keyword id="KW-1133">Transmembrane helix</keyword>
<evidence type="ECO:0000255" key="1">
    <source>
        <dbReference type="HAMAP-Rule" id="MF_00437"/>
    </source>
</evidence>
<geneLocation type="chloroplast"/>
<organism>
    <name type="scientific">Mesostigma viride</name>
    <name type="common">Green alga</name>
    <dbReference type="NCBI Taxonomy" id="41882"/>
    <lineage>
        <taxon>Eukaryota</taxon>
        <taxon>Viridiplantae</taxon>
        <taxon>Streptophyta</taxon>
        <taxon>Mesostigmatophyceae</taxon>
        <taxon>Mesostigmatales</taxon>
        <taxon>Mesostigmataceae</taxon>
        <taxon>Mesostigma</taxon>
    </lineage>
</organism>
<feature type="chain" id="PRO_0000217613" description="Photosystem I assembly protein Ycf4">
    <location>
        <begin position="1"/>
        <end position="187"/>
    </location>
</feature>
<feature type="transmembrane region" description="Helical" evidence="1">
    <location>
        <begin position="25"/>
        <end position="47"/>
    </location>
</feature>
<feature type="transmembrane region" description="Helical" evidence="1">
    <location>
        <begin position="62"/>
        <end position="84"/>
    </location>
</feature>
<proteinExistence type="inferred from homology"/>
<protein>
    <recommendedName>
        <fullName evidence="1">Photosystem I assembly protein Ycf4</fullName>
    </recommendedName>
</protein>
<accession>Q9MUN8</accession>
<gene>
    <name evidence="1" type="primary">ycf4</name>
</gene>
<name>YCF4_MESVI</name>
<comment type="function">
    <text evidence="1">Seems to be required for the assembly of the photosystem I complex.</text>
</comment>
<comment type="subcellular location">
    <subcellularLocation>
        <location evidence="1">Plastid</location>
        <location evidence="1">Chloroplast thylakoid membrane</location>
        <topology evidence="1">Multi-pass membrane protein</topology>
    </subcellularLocation>
</comment>
<comment type="similarity">
    <text evidence="1">Belongs to the Ycf4 family.</text>
</comment>
<reference key="1">
    <citation type="journal article" date="2000" name="Nature">
        <title>Ancestral chloroplast genome in Mesostigma viride reveals an early branch of green plant evolution.</title>
        <authorList>
            <person name="Lemieux C."/>
            <person name="Otis C."/>
            <person name="Turmel M."/>
        </authorList>
    </citation>
    <scope>NUCLEOTIDE SEQUENCE [LARGE SCALE GENOMIC DNA]</scope>
    <source>
        <strain>NIES-296 / KY-14 / CCMP 2046</strain>
    </source>
</reference>